<protein>
    <recommendedName>
        <fullName evidence="1">ATP synthase subunit b, chloroplastic</fullName>
    </recommendedName>
    <alternativeName>
        <fullName evidence="1">ATP synthase F(0) sector subunit b</fullName>
    </alternativeName>
    <alternativeName>
        <fullName evidence="1">ATPase subunit I</fullName>
    </alternativeName>
</protein>
<sequence length="175" mass="19585">MNFIPISLIFSGHGFGFNTNIFETNVINLAVVIGVVVSFVGDAVRELLKNRKETIVNNLREADNRALEAQEKLSQAKAQLADAQKKATEIREQGLVAAEQEKKLCIKQAEEDAARLKQVQQDTIRFQQQKAIQQISQQIVSLALQQVRQKLKMGASAPFHVSVNKSKIDLFKRSL</sequence>
<proteinExistence type="inferred from homology"/>
<comment type="function">
    <text evidence="1">F(1)F(0) ATP synthase produces ATP from ADP in the presence of a proton or sodium gradient. F-type ATPases consist of two structural domains, F(1) containing the extramembraneous catalytic core and F(0) containing the membrane proton channel, linked together by a central stalk and a peripheral stalk. During catalysis, ATP synthesis in the catalytic domain of F(1) is coupled via a rotary mechanism of the central stalk subunits to proton translocation.</text>
</comment>
<comment type="function">
    <text evidence="1">Component of the F(0) channel, it forms part of the peripheral stalk, linking F(1) to F(0).</text>
</comment>
<comment type="subunit">
    <text evidence="1">F-type ATPases have 2 components, F(1) - the catalytic core - and F(0) - the membrane proton channel. F(1) has five subunits: alpha(3), beta(3), gamma(1), delta(1), epsilon(1). F(0) has four main subunits: a(1), b(1), b'(1) and c(10-14). The alpha and beta chains form an alternating ring which encloses part of the gamma chain. F(1) is attached to F(0) by a central stalk formed by the gamma and epsilon chains, while a peripheral stalk is formed by the delta, b and b' chains.</text>
</comment>
<comment type="subcellular location">
    <subcellularLocation>
        <location evidence="1">Plastid</location>
        <location evidence="1">Chloroplast thylakoid membrane</location>
        <topology evidence="1">Single-pass membrane protein</topology>
    </subcellularLocation>
</comment>
<comment type="miscellaneous">
    <text>In plastids the F-type ATPase is also known as CF(1)CF(0).</text>
</comment>
<comment type="similarity">
    <text evidence="1">Belongs to the ATPase B chain family.</text>
</comment>
<reference key="1">
    <citation type="journal article" date="2005" name="Mol. Biol. Evol.">
        <title>The chloroplast genome sequence of the green alga Pseudendoclonium akinetum (Ulvophyceae) reveals unusual structural features and new insights into the branching order of chlorophyte lineages.</title>
        <authorList>
            <person name="Pombert J.-F."/>
            <person name="Otis C."/>
            <person name="Lemieux C."/>
            <person name="Turmel M."/>
        </authorList>
    </citation>
    <scope>NUCLEOTIDE SEQUENCE [LARGE SCALE GENOMIC DNA]</scope>
    <source>
        <strain>UTEX 1912</strain>
    </source>
</reference>
<gene>
    <name evidence="1" type="primary">atpF</name>
</gene>
<organism>
    <name type="scientific">Tupiella akineta</name>
    <name type="common">Green alga</name>
    <name type="synonym">Pseudendoclonium akinetum</name>
    <dbReference type="NCBI Taxonomy" id="160070"/>
    <lineage>
        <taxon>Eukaryota</taxon>
        <taxon>Viridiplantae</taxon>
        <taxon>Chlorophyta</taxon>
        <taxon>Ulvophyceae</taxon>
        <taxon>OUU clade</taxon>
        <taxon>Ulotrichales</taxon>
        <taxon>Tupiellaceae</taxon>
        <taxon>Tupiella</taxon>
    </lineage>
</organism>
<accession>Q3ZIZ8</accession>
<evidence type="ECO:0000255" key="1">
    <source>
        <dbReference type="HAMAP-Rule" id="MF_01398"/>
    </source>
</evidence>
<name>ATPF_TUPAK</name>
<dbReference type="EMBL" id="AY835431">
    <property type="protein sequence ID" value="AAV80691.1"/>
    <property type="molecule type" value="Genomic_DNA"/>
</dbReference>
<dbReference type="RefSeq" id="YP_636269.1">
    <property type="nucleotide sequence ID" value="NC_008114.1"/>
</dbReference>
<dbReference type="SMR" id="Q3ZIZ8"/>
<dbReference type="GeneID" id="4108763"/>
<dbReference type="GO" id="GO:0009535">
    <property type="term" value="C:chloroplast thylakoid membrane"/>
    <property type="evidence" value="ECO:0007669"/>
    <property type="project" value="UniProtKB-SubCell"/>
</dbReference>
<dbReference type="GO" id="GO:0045259">
    <property type="term" value="C:proton-transporting ATP synthase complex"/>
    <property type="evidence" value="ECO:0007669"/>
    <property type="project" value="UniProtKB-KW"/>
</dbReference>
<dbReference type="GO" id="GO:0046933">
    <property type="term" value="F:proton-transporting ATP synthase activity, rotational mechanism"/>
    <property type="evidence" value="ECO:0007669"/>
    <property type="project" value="UniProtKB-UniRule"/>
</dbReference>
<dbReference type="CDD" id="cd06503">
    <property type="entry name" value="ATP-synt_Fo_b"/>
    <property type="match status" value="1"/>
</dbReference>
<dbReference type="HAMAP" id="MF_01398">
    <property type="entry name" value="ATP_synth_b_bprime"/>
    <property type="match status" value="1"/>
</dbReference>
<dbReference type="InterPro" id="IPR002146">
    <property type="entry name" value="ATP_synth_b/b'su_bac/chlpt"/>
</dbReference>
<dbReference type="PANTHER" id="PTHR34264">
    <property type="entry name" value="ATP SYNTHASE SUBUNIT B, CHLOROPLASTIC"/>
    <property type="match status" value="1"/>
</dbReference>
<dbReference type="PANTHER" id="PTHR34264:SF3">
    <property type="entry name" value="ATP SYNTHASE SUBUNIT B, CHLOROPLASTIC"/>
    <property type="match status" value="1"/>
</dbReference>
<dbReference type="Pfam" id="PF00430">
    <property type="entry name" value="ATP-synt_B"/>
    <property type="match status" value="1"/>
</dbReference>
<feature type="chain" id="PRO_0000368975" description="ATP synthase subunit b, chloroplastic">
    <location>
        <begin position="1"/>
        <end position="175"/>
    </location>
</feature>
<feature type="transmembrane region" description="Helical" evidence="1">
    <location>
        <begin position="26"/>
        <end position="44"/>
    </location>
</feature>
<keyword id="KW-0066">ATP synthesis</keyword>
<keyword id="KW-0138">CF(0)</keyword>
<keyword id="KW-0150">Chloroplast</keyword>
<keyword id="KW-0375">Hydrogen ion transport</keyword>
<keyword id="KW-0406">Ion transport</keyword>
<keyword id="KW-0472">Membrane</keyword>
<keyword id="KW-0934">Plastid</keyword>
<keyword id="KW-0793">Thylakoid</keyword>
<keyword id="KW-0812">Transmembrane</keyword>
<keyword id="KW-1133">Transmembrane helix</keyword>
<keyword id="KW-0813">Transport</keyword>
<geneLocation type="chloroplast"/>